<dbReference type="EC" id="3.6.4.-" evidence="1"/>
<dbReference type="EMBL" id="AE017223">
    <property type="protein sequence ID" value="AAX75006.1"/>
    <property type="molecule type" value="Genomic_DNA"/>
</dbReference>
<dbReference type="RefSeq" id="WP_002964791.1">
    <property type="nucleotide sequence ID" value="NC_006932.1"/>
</dbReference>
<dbReference type="SMR" id="Q57BH8"/>
<dbReference type="EnsemblBacteria" id="AAX75006">
    <property type="protein sequence ID" value="AAX75006"/>
    <property type="gene ID" value="BruAb1_1687"/>
</dbReference>
<dbReference type="GeneID" id="97533144"/>
<dbReference type="KEGG" id="bmb:BruAb1_1687"/>
<dbReference type="HOGENOM" id="CLU_055599_1_0_5"/>
<dbReference type="Proteomes" id="UP000000540">
    <property type="component" value="Chromosome I"/>
</dbReference>
<dbReference type="GO" id="GO:0005737">
    <property type="term" value="C:cytoplasm"/>
    <property type="evidence" value="ECO:0007669"/>
    <property type="project" value="UniProtKB-SubCell"/>
</dbReference>
<dbReference type="GO" id="GO:0048476">
    <property type="term" value="C:Holliday junction resolvase complex"/>
    <property type="evidence" value="ECO:0007669"/>
    <property type="project" value="UniProtKB-UniRule"/>
</dbReference>
<dbReference type="GO" id="GO:0005524">
    <property type="term" value="F:ATP binding"/>
    <property type="evidence" value="ECO:0007669"/>
    <property type="project" value="UniProtKB-UniRule"/>
</dbReference>
<dbReference type="GO" id="GO:0016887">
    <property type="term" value="F:ATP hydrolysis activity"/>
    <property type="evidence" value="ECO:0007669"/>
    <property type="project" value="InterPro"/>
</dbReference>
<dbReference type="GO" id="GO:0000400">
    <property type="term" value="F:four-way junction DNA binding"/>
    <property type="evidence" value="ECO:0007669"/>
    <property type="project" value="UniProtKB-UniRule"/>
</dbReference>
<dbReference type="GO" id="GO:0009378">
    <property type="term" value="F:four-way junction helicase activity"/>
    <property type="evidence" value="ECO:0007669"/>
    <property type="project" value="InterPro"/>
</dbReference>
<dbReference type="GO" id="GO:0006310">
    <property type="term" value="P:DNA recombination"/>
    <property type="evidence" value="ECO:0007669"/>
    <property type="project" value="UniProtKB-UniRule"/>
</dbReference>
<dbReference type="GO" id="GO:0006281">
    <property type="term" value="P:DNA repair"/>
    <property type="evidence" value="ECO:0007669"/>
    <property type="project" value="UniProtKB-UniRule"/>
</dbReference>
<dbReference type="CDD" id="cd00009">
    <property type="entry name" value="AAA"/>
    <property type="match status" value="1"/>
</dbReference>
<dbReference type="Gene3D" id="1.10.8.60">
    <property type="match status" value="1"/>
</dbReference>
<dbReference type="Gene3D" id="3.40.50.300">
    <property type="entry name" value="P-loop containing nucleotide triphosphate hydrolases"/>
    <property type="match status" value="1"/>
</dbReference>
<dbReference type="Gene3D" id="1.10.10.10">
    <property type="entry name" value="Winged helix-like DNA-binding domain superfamily/Winged helix DNA-binding domain"/>
    <property type="match status" value="1"/>
</dbReference>
<dbReference type="HAMAP" id="MF_00016">
    <property type="entry name" value="DNA_HJ_migration_RuvB"/>
    <property type="match status" value="1"/>
</dbReference>
<dbReference type="InterPro" id="IPR003593">
    <property type="entry name" value="AAA+_ATPase"/>
</dbReference>
<dbReference type="InterPro" id="IPR041445">
    <property type="entry name" value="AAA_lid_4"/>
</dbReference>
<dbReference type="InterPro" id="IPR000641">
    <property type="entry name" value="CbxX/CfxQ"/>
</dbReference>
<dbReference type="InterPro" id="IPR004605">
    <property type="entry name" value="DNA_helicase_Holl-junc_RuvB"/>
</dbReference>
<dbReference type="InterPro" id="IPR027417">
    <property type="entry name" value="P-loop_NTPase"/>
</dbReference>
<dbReference type="InterPro" id="IPR008824">
    <property type="entry name" value="RuvB-like_N"/>
</dbReference>
<dbReference type="InterPro" id="IPR008823">
    <property type="entry name" value="RuvB_C"/>
</dbReference>
<dbReference type="InterPro" id="IPR036388">
    <property type="entry name" value="WH-like_DNA-bd_sf"/>
</dbReference>
<dbReference type="InterPro" id="IPR036390">
    <property type="entry name" value="WH_DNA-bd_sf"/>
</dbReference>
<dbReference type="NCBIfam" id="NF000868">
    <property type="entry name" value="PRK00080.1"/>
    <property type="match status" value="1"/>
</dbReference>
<dbReference type="NCBIfam" id="TIGR00635">
    <property type="entry name" value="ruvB"/>
    <property type="match status" value="1"/>
</dbReference>
<dbReference type="PANTHER" id="PTHR42848">
    <property type="match status" value="1"/>
</dbReference>
<dbReference type="PANTHER" id="PTHR42848:SF1">
    <property type="entry name" value="HOLLIDAY JUNCTION BRANCH MIGRATION COMPLEX SUBUNIT RUVB"/>
    <property type="match status" value="1"/>
</dbReference>
<dbReference type="Pfam" id="PF17864">
    <property type="entry name" value="AAA_lid_4"/>
    <property type="match status" value="1"/>
</dbReference>
<dbReference type="Pfam" id="PF05491">
    <property type="entry name" value="RuvB_C"/>
    <property type="match status" value="1"/>
</dbReference>
<dbReference type="Pfam" id="PF05496">
    <property type="entry name" value="RuvB_N"/>
    <property type="match status" value="1"/>
</dbReference>
<dbReference type="PRINTS" id="PR00819">
    <property type="entry name" value="CBXCFQXSUPER"/>
</dbReference>
<dbReference type="SMART" id="SM00382">
    <property type="entry name" value="AAA"/>
    <property type="match status" value="1"/>
</dbReference>
<dbReference type="SUPFAM" id="SSF52540">
    <property type="entry name" value="P-loop containing nucleoside triphosphate hydrolases"/>
    <property type="match status" value="1"/>
</dbReference>
<dbReference type="SUPFAM" id="SSF46785">
    <property type="entry name" value="Winged helix' DNA-binding domain"/>
    <property type="match status" value="1"/>
</dbReference>
<proteinExistence type="inferred from homology"/>
<gene>
    <name evidence="1" type="primary">ruvB</name>
    <name type="ordered locus">BruAb1_1687</name>
</gene>
<evidence type="ECO:0000255" key="1">
    <source>
        <dbReference type="HAMAP-Rule" id="MF_00016"/>
    </source>
</evidence>
<accession>Q57BH8</accession>
<sequence length="346" mass="38241">MSDRNPLIDADRRADEDNTLRPQTLDDFVGQAAARANLKVFIEAAKVRGEALDHVLFVGPPGLGKTTLAQIMAKELGVNFRSTSGPVIAKAGDLAALLTNLEERDVLFIDEIHRLSPAVEEILYPAMEDFQLDLIIGEGPAARSVKIDLAKFTLVAATTRLGLLTTPLRDRFGIPVRLNFYTVEELEYIVRRGARIMQMGISSDGAREVARRSRGTPRIAGRLLRRVRDFALVAGADIIDRRIADEALSRLEVDNRGLDQLDRRYLNIIARNFGGGPVGIETIAAGLSEPRDAIEDIIEPYLIQQGFLQRTPRGRVLTAVAWQHLGLPAPAEIIQQSQYGLFMEDE</sequence>
<feature type="chain" id="PRO_0000235351" description="Holliday junction branch migration complex subunit RuvB">
    <location>
        <begin position="1"/>
        <end position="346"/>
    </location>
</feature>
<feature type="region of interest" description="Large ATPase domain (RuvB-L)" evidence="1">
    <location>
        <begin position="1"/>
        <end position="181"/>
    </location>
</feature>
<feature type="region of interest" description="Small ATPAse domain (RuvB-S)" evidence="1">
    <location>
        <begin position="182"/>
        <end position="252"/>
    </location>
</feature>
<feature type="region of interest" description="Head domain (RuvB-H)" evidence="1">
    <location>
        <begin position="255"/>
        <end position="346"/>
    </location>
</feature>
<feature type="binding site" evidence="1">
    <location>
        <position position="20"/>
    </location>
    <ligand>
        <name>ATP</name>
        <dbReference type="ChEBI" id="CHEBI:30616"/>
    </ligand>
</feature>
<feature type="binding site" evidence="1">
    <location>
        <position position="21"/>
    </location>
    <ligand>
        <name>ATP</name>
        <dbReference type="ChEBI" id="CHEBI:30616"/>
    </ligand>
</feature>
<feature type="binding site" evidence="1">
    <location>
        <position position="62"/>
    </location>
    <ligand>
        <name>ATP</name>
        <dbReference type="ChEBI" id="CHEBI:30616"/>
    </ligand>
</feature>
<feature type="binding site" evidence="1">
    <location>
        <position position="65"/>
    </location>
    <ligand>
        <name>ATP</name>
        <dbReference type="ChEBI" id="CHEBI:30616"/>
    </ligand>
</feature>
<feature type="binding site" evidence="1">
    <location>
        <position position="66"/>
    </location>
    <ligand>
        <name>ATP</name>
        <dbReference type="ChEBI" id="CHEBI:30616"/>
    </ligand>
</feature>
<feature type="binding site" evidence="1">
    <location>
        <position position="66"/>
    </location>
    <ligand>
        <name>Mg(2+)</name>
        <dbReference type="ChEBI" id="CHEBI:18420"/>
    </ligand>
</feature>
<feature type="binding site" evidence="1">
    <location>
        <position position="67"/>
    </location>
    <ligand>
        <name>ATP</name>
        <dbReference type="ChEBI" id="CHEBI:30616"/>
    </ligand>
</feature>
<feature type="binding site" evidence="1">
    <location>
        <begin position="128"/>
        <end position="130"/>
    </location>
    <ligand>
        <name>ATP</name>
        <dbReference type="ChEBI" id="CHEBI:30616"/>
    </ligand>
</feature>
<feature type="binding site" evidence="1">
    <location>
        <position position="171"/>
    </location>
    <ligand>
        <name>ATP</name>
        <dbReference type="ChEBI" id="CHEBI:30616"/>
    </ligand>
</feature>
<feature type="binding site" evidence="1">
    <location>
        <position position="181"/>
    </location>
    <ligand>
        <name>ATP</name>
        <dbReference type="ChEBI" id="CHEBI:30616"/>
    </ligand>
</feature>
<feature type="binding site" evidence="1">
    <location>
        <position position="218"/>
    </location>
    <ligand>
        <name>ATP</name>
        <dbReference type="ChEBI" id="CHEBI:30616"/>
    </ligand>
</feature>
<feature type="binding site" evidence="1">
    <location>
        <position position="291"/>
    </location>
    <ligand>
        <name>DNA</name>
        <dbReference type="ChEBI" id="CHEBI:16991"/>
    </ligand>
</feature>
<feature type="binding site" evidence="1">
    <location>
        <position position="310"/>
    </location>
    <ligand>
        <name>DNA</name>
        <dbReference type="ChEBI" id="CHEBI:16991"/>
    </ligand>
</feature>
<feature type="binding site" evidence="1">
    <location>
        <position position="315"/>
    </location>
    <ligand>
        <name>DNA</name>
        <dbReference type="ChEBI" id="CHEBI:16991"/>
    </ligand>
</feature>
<organism>
    <name type="scientific">Brucella abortus biovar 1 (strain 9-941)</name>
    <dbReference type="NCBI Taxonomy" id="262698"/>
    <lineage>
        <taxon>Bacteria</taxon>
        <taxon>Pseudomonadati</taxon>
        <taxon>Pseudomonadota</taxon>
        <taxon>Alphaproteobacteria</taxon>
        <taxon>Hyphomicrobiales</taxon>
        <taxon>Brucellaceae</taxon>
        <taxon>Brucella/Ochrobactrum group</taxon>
        <taxon>Brucella</taxon>
    </lineage>
</organism>
<name>RUVB_BRUAB</name>
<keyword id="KW-0067">ATP-binding</keyword>
<keyword id="KW-0963">Cytoplasm</keyword>
<keyword id="KW-0227">DNA damage</keyword>
<keyword id="KW-0233">DNA recombination</keyword>
<keyword id="KW-0234">DNA repair</keyword>
<keyword id="KW-0238">DNA-binding</keyword>
<keyword id="KW-0378">Hydrolase</keyword>
<keyword id="KW-0547">Nucleotide-binding</keyword>
<comment type="function">
    <text evidence="1">The RuvA-RuvB-RuvC complex processes Holliday junction (HJ) DNA during genetic recombination and DNA repair, while the RuvA-RuvB complex plays an important role in the rescue of blocked DNA replication forks via replication fork reversal (RFR). RuvA specifically binds to HJ cruciform DNA, conferring on it an open structure. The RuvB hexamer acts as an ATP-dependent pump, pulling dsDNA into and through the RuvAB complex. RuvB forms 2 homohexamers on either side of HJ DNA bound by 1 or 2 RuvA tetramers; 4 subunits per hexamer contact DNA at a time. Coordinated motions by a converter formed by DNA-disengaged RuvB subunits stimulates ATP hydrolysis and nucleotide exchange. Immobilization of the converter enables RuvB to convert the ATP-contained energy into a lever motion, pulling 2 nucleotides of DNA out of the RuvA tetramer per ATP hydrolyzed, thus driving DNA branch migration. The RuvB motors rotate together with the DNA substrate, which together with the progressing nucleotide cycle form the mechanistic basis for DNA recombination by continuous HJ branch migration. Branch migration allows RuvC to scan DNA until it finds its consensus sequence, where it cleaves and resolves cruciform DNA.</text>
</comment>
<comment type="catalytic activity">
    <reaction evidence="1">
        <text>ATP + H2O = ADP + phosphate + H(+)</text>
        <dbReference type="Rhea" id="RHEA:13065"/>
        <dbReference type="ChEBI" id="CHEBI:15377"/>
        <dbReference type="ChEBI" id="CHEBI:15378"/>
        <dbReference type="ChEBI" id="CHEBI:30616"/>
        <dbReference type="ChEBI" id="CHEBI:43474"/>
        <dbReference type="ChEBI" id="CHEBI:456216"/>
    </reaction>
</comment>
<comment type="subunit">
    <text evidence="1">Homohexamer. Forms an RuvA(8)-RuvB(12)-Holliday junction (HJ) complex. HJ DNA is sandwiched between 2 RuvA tetramers; dsDNA enters through RuvA and exits via RuvB. An RuvB hexamer assembles on each DNA strand where it exits the tetramer. Each RuvB hexamer is contacted by two RuvA subunits (via domain III) on 2 adjacent RuvB subunits; this complex drives branch migration. In the full resolvosome a probable DNA-RuvA(4)-RuvB(12)-RuvC(2) complex forms which resolves the HJ.</text>
</comment>
<comment type="subcellular location">
    <subcellularLocation>
        <location evidence="1">Cytoplasm</location>
    </subcellularLocation>
</comment>
<comment type="domain">
    <text evidence="1">Has 3 domains, the large (RuvB-L) and small ATPase (RuvB-S) domains and the C-terminal head (RuvB-H) domain. The head domain binds DNA, while the ATPase domains jointly bind ATP, ADP or are empty depending on the state of the subunit in the translocation cycle. During a single DNA translocation step the structure of each domain remains the same, but their relative positions change.</text>
</comment>
<comment type="similarity">
    <text evidence="1">Belongs to the RuvB family.</text>
</comment>
<reference key="1">
    <citation type="journal article" date="2005" name="J. Bacteriol.">
        <title>Completion of the genome sequence of Brucella abortus and comparison to the highly similar genomes of Brucella melitensis and Brucella suis.</title>
        <authorList>
            <person name="Halling S.M."/>
            <person name="Peterson-Burch B.D."/>
            <person name="Bricker B.J."/>
            <person name="Zuerner R.L."/>
            <person name="Qing Z."/>
            <person name="Li L.-L."/>
            <person name="Kapur V."/>
            <person name="Alt D.P."/>
            <person name="Olsen S.C."/>
        </authorList>
    </citation>
    <scope>NUCLEOTIDE SEQUENCE [LARGE SCALE GENOMIC DNA]</scope>
    <source>
        <strain>9-941</strain>
    </source>
</reference>
<protein>
    <recommendedName>
        <fullName evidence="1">Holliday junction branch migration complex subunit RuvB</fullName>
        <ecNumber evidence="1">3.6.4.-</ecNumber>
    </recommendedName>
</protein>